<name>PLSX_CUPNH</name>
<keyword id="KW-0963">Cytoplasm</keyword>
<keyword id="KW-0444">Lipid biosynthesis</keyword>
<keyword id="KW-0443">Lipid metabolism</keyword>
<keyword id="KW-0594">Phospholipid biosynthesis</keyword>
<keyword id="KW-1208">Phospholipid metabolism</keyword>
<keyword id="KW-1185">Reference proteome</keyword>
<keyword id="KW-0808">Transferase</keyword>
<comment type="function">
    <text evidence="1">Catalyzes the reversible formation of acyl-phosphate (acyl-PO(4)) from acyl-[acyl-carrier-protein] (acyl-ACP). This enzyme utilizes acyl-ACP as fatty acyl donor, but not acyl-CoA.</text>
</comment>
<comment type="catalytic activity">
    <reaction evidence="1">
        <text>a fatty acyl-[ACP] + phosphate = an acyl phosphate + holo-[ACP]</text>
        <dbReference type="Rhea" id="RHEA:42292"/>
        <dbReference type="Rhea" id="RHEA-COMP:9685"/>
        <dbReference type="Rhea" id="RHEA-COMP:14125"/>
        <dbReference type="ChEBI" id="CHEBI:43474"/>
        <dbReference type="ChEBI" id="CHEBI:59918"/>
        <dbReference type="ChEBI" id="CHEBI:64479"/>
        <dbReference type="ChEBI" id="CHEBI:138651"/>
        <dbReference type="EC" id="2.3.1.274"/>
    </reaction>
</comment>
<comment type="pathway">
    <text evidence="1">Lipid metabolism; phospholipid metabolism.</text>
</comment>
<comment type="subunit">
    <text evidence="1">Homodimer. Probably interacts with PlsY.</text>
</comment>
<comment type="subcellular location">
    <subcellularLocation>
        <location evidence="1">Cytoplasm</location>
    </subcellularLocation>
    <text evidence="1">Associated with the membrane possibly through PlsY.</text>
</comment>
<comment type="similarity">
    <text evidence="1">Belongs to the PlsX family.</text>
</comment>
<sequence>MTIKIAIDCMGGDHGVSVTVPAAISFLSRHDDAEMVLVGLPDAIRTQLKKLHALDHPRVTIVEATEVITMDDPVEVALRKKRDSSMRVAVTQVKEGLAGACISAGNTGALMAVSRYVLKTLEGIERPAIATTIPNEQGWGTTVLDLGANADCEPEHLLQFARMAEAMVAVVDHKEHPTVGLLNIGEEVIKGNEVVKRAGELLRASELNFYGNVEGNDIFKGTTDIVVCDGFVGNVALKSTEGLAKMIGSMIKEEFTRSWFTKLLAAVAMPVLSRLARRLDPARYNGASLLGLRGLVIKSHGSADAHSFEWAIKRGYDAAKNGVIARITRAFADKSSAAGAAQPAPETEVPGAHPSPHVA</sequence>
<dbReference type="EC" id="2.3.1.274" evidence="1"/>
<dbReference type="EMBL" id="AM260479">
    <property type="protein sequence ID" value="CAJ93653.1"/>
    <property type="molecule type" value="Genomic_DNA"/>
</dbReference>
<dbReference type="RefSeq" id="WP_010814676.1">
    <property type="nucleotide sequence ID" value="NZ_CP039287.1"/>
</dbReference>
<dbReference type="SMR" id="Q0K8L8"/>
<dbReference type="STRING" id="381666.H16_A2570"/>
<dbReference type="KEGG" id="reh:H16_A2570"/>
<dbReference type="eggNOG" id="COG0416">
    <property type="taxonomic scope" value="Bacteria"/>
</dbReference>
<dbReference type="HOGENOM" id="CLU_039379_1_0_4"/>
<dbReference type="OrthoDB" id="9806408at2"/>
<dbReference type="UniPathway" id="UPA00085"/>
<dbReference type="Proteomes" id="UP000008210">
    <property type="component" value="Chromosome 1"/>
</dbReference>
<dbReference type="GO" id="GO:0005737">
    <property type="term" value="C:cytoplasm"/>
    <property type="evidence" value="ECO:0007669"/>
    <property type="project" value="UniProtKB-SubCell"/>
</dbReference>
<dbReference type="GO" id="GO:0043811">
    <property type="term" value="F:phosphate:acyl-[acyl carrier protein] acyltransferase activity"/>
    <property type="evidence" value="ECO:0007669"/>
    <property type="project" value="UniProtKB-UniRule"/>
</dbReference>
<dbReference type="GO" id="GO:0006633">
    <property type="term" value="P:fatty acid biosynthetic process"/>
    <property type="evidence" value="ECO:0007669"/>
    <property type="project" value="UniProtKB-UniRule"/>
</dbReference>
<dbReference type="GO" id="GO:0008654">
    <property type="term" value="P:phospholipid biosynthetic process"/>
    <property type="evidence" value="ECO:0007669"/>
    <property type="project" value="UniProtKB-KW"/>
</dbReference>
<dbReference type="Gene3D" id="3.40.718.10">
    <property type="entry name" value="Isopropylmalate Dehydrogenase"/>
    <property type="match status" value="1"/>
</dbReference>
<dbReference type="HAMAP" id="MF_00019">
    <property type="entry name" value="PlsX"/>
    <property type="match status" value="1"/>
</dbReference>
<dbReference type="InterPro" id="IPR003664">
    <property type="entry name" value="FA_synthesis"/>
</dbReference>
<dbReference type="InterPro" id="IPR012281">
    <property type="entry name" value="Phospholipid_synth_PlsX-like"/>
</dbReference>
<dbReference type="NCBIfam" id="TIGR00182">
    <property type="entry name" value="plsX"/>
    <property type="match status" value="1"/>
</dbReference>
<dbReference type="PANTHER" id="PTHR30100">
    <property type="entry name" value="FATTY ACID/PHOSPHOLIPID SYNTHESIS PROTEIN PLSX"/>
    <property type="match status" value="1"/>
</dbReference>
<dbReference type="PANTHER" id="PTHR30100:SF1">
    <property type="entry name" value="PHOSPHATE ACYLTRANSFERASE"/>
    <property type="match status" value="1"/>
</dbReference>
<dbReference type="Pfam" id="PF02504">
    <property type="entry name" value="FA_synthesis"/>
    <property type="match status" value="1"/>
</dbReference>
<dbReference type="PIRSF" id="PIRSF002465">
    <property type="entry name" value="Phsphlp_syn_PlsX"/>
    <property type="match status" value="1"/>
</dbReference>
<dbReference type="SUPFAM" id="SSF53659">
    <property type="entry name" value="Isocitrate/Isopropylmalate dehydrogenase-like"/>
    <property type="match status" value="1"/>
</dbReference>
<feature type="chain" id="PRO_1000001807" description="Phosphate acyltransferase">
    <location>
        <begin position="1"/>
        <end position="359"/>
    </location>
</feature>
<feature type="region of interest" description="Disordered" evidence="2">
    <location>
        <begin position="337"/>
        <end position="359"/>
    </location>
</feature>
<gene>
    <name evidence="1" type="primary">plsX</name>
    <name type="ordered locus">H16_A2570</name>
</gene>
<proteinExistence type="inferred from homology"/>
<reference key="1">
    <citation type="journal article" date="2006" name="Nat. Biotechnol.">
        <title>Genome sequence of the bioplastic-producing 'Knallgas' bacterium Ralstonia eutropha H16.</title>
        <authorList>
            <person name="Pohlmann A."/>
            <person name="Fricke W.F."/>
            <person name="Reinecke F."/>
            <person name="Kusian B."/>
            <person name="Liesegang H."/>
            <person name="Cramm R."/>
            <person name="Eitinger T."/>
            <person name="Ewering C."/>
            <person name="Poetter M."/>
            <person name="Schwartz E."/>
            <person name="Strittmatter A."/>
            <person name="Voss I."/>
            <person name="Gottschalk G."/>
            <person name="Steinbuechel A."/>
            <person name="Friedrich B."/>
            <person name="Bowien B."/>
        </authorList>
    </citation>
    <scope>NUCLEOTIDE SEQUENCE [LARGE SCALE GENOMIC DNA]</scope>
    <source>
        <strain>ATCC 17699 / DSM 428 / KCTC 22496 / NCIMB 10442 / H16 / Stanier 337</strain>
    </source>
</reference>
<organism>
    <name type="scientific">Cupriavidus necator (strain ATCC 17699 / DSM 428 / KCTC 22496 / NCIMB 10442 / H16 / Stanier 337)</name>
    <name type="common">Ralstonia eutropha</name>
    <dbReference type="NCBI Taxonomy" id="381666"/>
    <lineage>
        <taxon>Bacteria</taxon>
        <taxon>Pseudomonadati</taxon>
        <taxon>Pseudomonadota</taxon>
        <taxon>Betaproteobacteria</taxon>
        <taxon>Burkholderiales</taxon>
        <taxon>Burkholderiaceae</taxon>
        <taxon>Cupriavidus</taxon>
    </lineage>
</organism>
<protein>
    <recommendedName>
        <fullName evidence="1">Phosphate acyltransferase</fullName>
        <ecNumber evidence="1">2.3.1.274</ecNumber>
    </recommendedName>
    <alternativeName>
        <fullName evidence="1">Acyl-ACP phosphotransacylase</fullName>
    </alternativeName>
    <alternativeName>
        <fullName evidence="1">Acyl-[acyl-carrier-protein]--phosphate acyltransferase</fullName>
    </alternativeName>
    <alternativeName>
        <fullName evidence="1">Phosphate-acyl-ACP acyltransferase</fullName>
    </alternativeName>
</protein>
<evidence type="ECO:0000255" key="1">
    <source>
        <dbReference type="HAMAP-Rule" id="MF_00019"/>
    </source>
</evidence>
<evidence type="ECO:0000256" key="2">
    <source>
        <dbReference type="SAM" id="MobiDB-lite"/>
    </source>
</evidence>
<accession>Q0K8L8</accession>